<feature type="chain" id="PRO_1000055457" description="Large ribosomal subunit protein uL13">
    <location>
        <begin position="1"/>
        <end position="154"/>
    </location>
</feature>
<gene>
    <name evidence="1" type="primary">rplM</name>
    <name type="ordered locus">Rsph17025_2176</name>
</gene>
<organism>
    <name type="scientific">Cereibacter sphaeroides (strain ATCC 17025 / ATH 2.4.3)</name>
    <name type="common">Rhodobacter sphaeroides</name>
    <dbReference type="NCBI Taxonomy" id="349102"/>
    <lineage>
        <taxon>Bacteria</taxon>
        <taxon>Pseudomonadati</taxon>
        <taxon>Pseudomonadota</taxon>
        <taxon>Alphaproteobacteria</taxon>
        <taxon>Rhodobacterales</taxon>
        <taxon>Paracoccaceae</taxon>
        <taxon>Cereibacter</taxon>
    </lineage>
</organism>
<accession>A4WUK2</accession>
<keyword id="KW-0687">Ribonucleoprotein</keyword>
<keyword id="KW-0689">Ribosomal protein</keyword>
<dbReference type="EMBL" id="CP000661">
    <property type="protein sequence ID" value="ABP71066.1"/>
    <property type="molecule type" value="Genomic_DNA"/>
</dbReference>
<dbReference type="SMR" id="A4WUK2"/>
<dbReference type="STRING" id="349102.Rsph17025_2176"/>
<dbReference type="KEGG" id="rsq:Rsph17025_2176"/>
<dbReference type="eggNOG" id="COG0102">
    <property type="taxonomic scope" value="Bacteria"/>
</dbReference>
<dbReference type="HOGENOM" id="CLU_082184_2_0_5"/>
<dbReference type="BioCyc" id="RSPH349102:G1G8M-2245-MONOMER"/>
<dbReference type="GO" id="GO:0022625">
    <property type="term" value="C:cytosolic large ribosomal subunit"/>
    <property type="evidence" value="ECO:0007669"/>
    <property type="project" value="TreeGrafter"/>
</dbReference>
<dbReference type="GO" id="GO:0003729">
    <property type="term" value="F:mRNA binding"/>
    <property type="evidence" value="ECO:0007669"/>
    <property type="project" value="TreeGrafter"/>
</dbReference>
<dbReference type="GO" id="GO:0003735">
    <property type="term" value="F:structural constituent of ribosome"/>
    <property type="evidence" value="ECO:0007669"/>
    <property type="project" value="InterPro"/>
</dbReference>
<dbReference type="GO" id="GO:0017148">
    <property type="term" value="P:negative regulation of translation"/>
    <property type="evidence" value="ECO:0007669"/>
    <property type="project" value="TreeGrafter"/>
</dbReference>
<dbReference type="GO" id="GO:0006412">
    <property type="term" value="P:translation"/>
    <property type="evidence" value="ECO:0007669"/>
    <property type="project" value="UniProtKB-UniRule"/>
</dbReference>
<dbReference type="CDD" id="cd00392">
    <property type="entry name" value="Ribosomal_L13"/>
    <property type="match status" value="1"/>
</dbReference>
<dbReference type="FunFam" id="3.90.1180.10:FF:000001">
    <property type="entry name" value="50S ribosomal protein L13"/>
    <property type="match status" value="1"/>
</dbReference>
<dbReference type="Gene3D" id="3.90.1180.10">
    <property type="entry name" value="Ribosomal protein L13"/>
    <property type="match status" value="1"/>
</dbReference>
<dbReference type="HAMAP" id="MF_01366">
    <property type="entry name" value="Ribosomal_uL13"/>
    <property type="match status" value="1"/>
</dbReference>
<dbReference type="InterPro" id="IPR005822">
    <property type="entry name" value="Ribosomal_uL13"/>
</dbReference>
<dbReference type="InterPro" id="IPR005823">
    <property type="entry name" value="Ribosomal_uL13_bac-type"/>
</dbReference>
<dbReference type="InterPro" id="IPR036899">
    <property type="entry name" value="Ribosomal_uL13_sf"/>
</dbReference>
<dbReference type="NCBIfam" id="TIGR01066">
    <property type="entry name" value="rplM_bact"/>
    <property type="match status" value="1"/>
</dbReference>
<dbReference type="PANTHER" id="PTHR11545:SF2">
    <property type="entry name" value="LARGE RIBOSOMAL SUBUNIT PROTEIN UL13M"/>
    <property type="match status" value="1"/>
</dbReference>
<dbReference type="PANTHER" id="PTHR11545">
    <property type="entry name" value="RIBOSOMAL PROTEIN L13"/>
    <property type="match status" value="1"/>
</dbReference>
<dbReference type="Pfam" id="PF00572">
    <property type="entry name" value="Ribosomal_L13"/>
    <property type="match status" value="1"/>
</dbReference>
<dbReference type="PIRSF" id="PIRSF002181">
    <property type="entry name" value="Ribosomal_L13"/>
    <property type="match status" value="1"/>
</dbReference>
<dbReference type="SUPFAM" id="SSF52161">
    <property type="entry name" value="Ribosomal protein L13"/>
    <property type="match status" value="1"/>
</dbReference>
<sequence length="154" mass="17107">MKTFTATPADIEKKWILIDAEGVVLGRLATIVANILRGKNKPTFTPHMDMGDNVIIINADKVQMTGNKRADKRYYWHTGHPGGIKFRTAAQVLDGAHPERVVIKAVERMISRNSLGRQQMTNLRVYAGAEHPHEAQQPTVLDVASLNPKNTRSA</sequence>
<evidence type="ECO:0000255" key="1">
    <source>
        <dbReference type="HAMAP-Rule" id="MF_01366"/>
    </source>
</evidence>
<evidence type="ECO:0000305" key="2"/>
<protein>
    <recommendedName>
        <fullName evidence="1">Large ribosomal subunit protein uL13</fullName>
    </recommendedName>
    <alternativeName>
        <fullName evidence="2">50S ribosomal protein L13</fullName>
    </alternativeName>
</protein>
<proteinExistence type="inferred from homology"/>
<comment type="function">
    <text evidence="1">This protein is one of the early assembly proteins of the 50S ribosomal subunit, although it is not seen to bind rRNA by itself. It is important during the early stages of 50S assembly.</text>
</comment>
<comment type="subunit">
    <text evidence="1">Part of the 50S ribosomal subunit.</text>
</comment>
<comment type="similarity">
    <text evidence="1">Belongs to the universal ribosomal protein uL13 family.</text>
</comment>
<reference key="1">
    <citation type="submission" date="2007-04" db="EMBL/GenBank/DDBJ databases">
        <title>Complete sequence of chromosome of Rhodobacter sphaeroides ATCC 17025.</title>
        <authorList>
            <consortium name="US DOE Joint Genome Institute"/>
            <person name="Copeland A."/>
            <person name="Lucas S."/>
            <person name="Lapidus A."/>
            <person name="Barry K."/>
            <person name="Detter J.C."/>
            <person name="Glavina del Rio T."/>
            <person name="Hammon N."/>
            <person name="Israni S."/>
            <person name="Dalin E."/>
            <person name="Tice H."/>
            <person name="Pitluck S."/>
            <person name="Chertkov O."/>
            <person name="Brettin T."/>
            <person name="Bruce D."/>
            <person name="Han C."/>
            <person name="Schmutz J."/>
            <person name="Larimer F."/>
            <person name="Land M."/>
            <person name="Hauser L."/>
            <person name="Kyrpides N."/>
            <person name="Kim E."/>
            <person name="Richardson P."/>
            <person name="Mackenzie C."/>
            <person name="Choudhary M."/>
            <person name="Donohue T.J."/>
            <person name="Kaplan S."/>
        </authorList>
    </citation>
    <scope>NUCLEOTIDE SEQUENCE [LARGE SCALE GENOMIC DNA]</scope>
    <source>
        <strain>ATCC 17025 / ATH 2.4.3</strain>
    </source>
</reference>
<name>RL13_CERS5</name>